<gene>
    <name type="primary">tig</name>
    <name type="ordered locus">Cj0193c</name>
</gene>
<sequence length="444" mass="50968">MEVKAKQLDSVNATASVKIPSGMIKSEVENLAKKASKSVKMDGFRPGKVPVSAVLKRYERELTQDAEQNLFKSAVNSALQELKKENKELVGEPYFEKFDRKDGEIIAELILSFKPEIKLEGYEKLIPEYQTPKVSKKEIDEKKDELLKRFATPEAIKTKRALKEGDFAKFDFEGFVDDKAFEGGKAENYVLEIGSKQFIPGFEDGMVGMKIGEEKDIKVTFPKEYGAAHLAGKDAVFKVKLHEIQELKIPELDDEMLKKLLPGEEKASVEVLDEKLKEQIKNEKLFKLVNDELKGKFADALIEKYNFDLPKGIVEQETDMQMRAAFNTFSEKEIEELKASKEKYQEKRDSFKEEAQKSVKLTFIIDELAKLRKIEVNDQELIQAIYFEAYRYGMNPKEHLENYKKQGALPAVKMALIEEKLFNDIFIPKTEKSEKVSKKEKEDK</sequence>
<keyword id="KW-0024">Alternative initiation</keyword>
<keyword id="KW-0131">Cell cycle</keyword>
<keyword id="KW-0132">Cell division</keyword>
<keyword id="KW-0143">Chaperone</keyword>
<keyword id="KW-0963">Cytoplasm</keyword>
<keyword id="KW-0413">Isomerase</keyword>
<keyword id="KW-1185">Reference proteome</keyword>
<keyword id="KW-0697">Rotamase</keyword>
<feature type="chain" id="PRO_0000034304" description="Trigger factor">
    <location>
        <begin position="1"/>
        <end position="444"/>
    </location>
</feature>
<feature type="domain" description="PPIase FKBP-type">
    <location>
        <begin position="165"/>
        <end position="250"/>
    </location>
</feature>
<feature type="splice variant" id="VSP_018899" description="In isoform Short." evidence="2">
    <location>
        <begin position="1"/>
        <end position="22"/>
    </location>
</feature>
<feature type="sequence conflict" description="In Ref. 1; CAA59930/CAA59931." evidence="2" ref="1">
    <original>T</original>
    <variation>S</variation>
    <location>
        <position position="63"/>
    </location>
</feature>
<feature type="sequence conflict" description="In Ref. 1; CAA59930/CAA59931." evidence="2" ref="1">
    <original>A</original>
    <variation>R</variation>
    <location>
        <position position="228"/>
    </location>
</feature>
<feature type="sequence conflict" description="In Ref. 1; CAA59930/CAA59931." evidence="2" ref="1">
    <original>S</original>
    <variation>C</variation>
    <location>
        <position position="330"/>
    </location>
</feature>
<feature type="sequence conflict" description="In Ref. 1; CAA59930." evidence="2" ref="1">
    <original>NPKEHLE</original>
    <variation>IQRAFR</variation>
    <location>
        <begin position="395"/>
        <end position="401"/>
    </location>
</feature>
<feature type="sequence conflict" description="In Ref. 1; CAA59930/CAA59931." evidence="2" ref="1">
    <original>KQGALPAVKMALIEEKLFNDIFIPKTEKSEKVSKKEKEDK</original>
    <variation>NKELCLL</variation>
    <location>
        <begin position="405"/>
        <end position="444"/>
    </location>
</feature>
<dbReference type="EC" id="5.2.1.8"/>
<dbReference type="EMBL" id="X85954">
    <property type="protein sequence ID" value="CAA59930.1"/>
    <property type="molecule type" value="Genomic_DNA"/>
</dbReference>
<dbReference type="EMBL" id="X85954">
    <property type="protein sequence ID" value="CAA59931.1"/>
    <property type="molecule type" value="Genomic_DNA"/>
</dbReference>
<dbReference type="EMBL" id="AL111168">
    <property type="protein sequence ID" value="CAL34362.1"/>
    <property type="molecule type" value="Genomic_DNA"/>
</dbReference>
<dbReference type="PIR" id="H81437">
    <property type="entry name" value="H81437"/>
</dbReference>
<dbReference type="PIR" id="I40755">
    <property type="entry name" value="I40755"/>
</dbReference>
<dbReference type="RefSeq" id="WP_002851938.1">
    <property type="nucleotide sequence ID" value="NZ_SZUC01000006.1"/>
</dbReference>
<dbReference type="RefSeq" id="YP_002343651.1">
    <molecule id="Q46108-1"/>
    <property type="nucleotide sequence ID" value="NC_002163.1"/>
</dbReference>
<dbReference type="SMR" id="Q46108"/>
<dbReference type="IntAct" id="Q46108">
    <property type="interactions" value="2"/>
</dbReference>
<dbReference type="STRING" id="192222.Cj0193c"/>
<dbReference type="PaxDb" id="192222-Cj0193c"/>
<dbReference type="DNASU" id="904535"/>
<dbReference type="EnsemblBacteria" id="CAL34362">
    <property type="protein sequence ID" value="CAL34362"/>
    <property type="gene ID" value="Cj0193c"/>
</dbReference>
<dbReference type="GeneID" id="904535"/>
<dbReference type="KEGG" id="cje:Cj0193c"/>
<dbReference type="PATRIC" id="fig|192222.6.peg.190"/>
<dbReference type="eggNOG" id="COG0544">
    <property type="taxonomic scope" value="Bacteria"/>
</dbReference>
<dbReference type="HOGENOM" id="CLU_033058_2_2_7"/>
<dbReference type="OrthoDB" id="9767721at2"/>
<dbReference type="Proteomes" id="UP000000799">
    <property type="component" value="Chromosome"/>
</dbReference>
<dbReference type="GO" id="GO:0005737">
    <property type="term" value="C:cytoplasm"/>
    <property type="evidence" value="ECO:0007669"/>
    <property type="project" value="UniProtKB-SubCell"/>
</dbReference>
<dbReference type="GO" id="GO:0003755">
    <property type="term" value="F:peptidyl-prolyl cis-trans isomerase activity"/>
    <property type="evidence" value="ECO:0007669"/>
    <property type="project" value="UniProtKB-UniRule"/>
</dbReference>
<dbReference type="GO" id="GO:0051301">
    <property type="term" value="P:cell division"/>
    <property type="evidence" value="ECO:0007669"/>
    <property type="project" value="UniProtKB-KW"/>
</dbReference>
<dbReference type="GO" id="GO:0006457">
    <property type="term" value="P:protein folding"/>
    <property type="evidence" value="ECO:0007669"/>
    <property type="project" value="UniProtKB-UniRule"/>
</dbReference>
<dbReference type="GO" id="GO:0015031">
    <property type="term" value="P:protein transport"/>
    <property type="evidence" value="ECO:0007669"/>
    <property type="project" value="UniProtKB-UniRule"/>
</dbReference>
<dbReference type="FunFam" id="3.10.50.40:FF:000001">
    <property type="entry name" value="Trigger factor"/>
    <property type="match status" value="1"/>
</dbReference>
<dbReference type="Gene3D" id="3.10.50.40">
    <property type="match status" value="1"/>
</dbReference>
<dbReference type="Gene3D" id="3.30.70.1050">
    <property type="entry name" value="Trigger factor ribosome-binding domain"/>
    <property type="match status" value="1"/>
</dbReference>
<dbReference type="Gene3D" id="1.10.3120.10">
    <property type="entry name" value="Trigger factor, C-terminal domain"/>
    <property type="match status" value="1"/>
</dbReference>
<dbReference type="HAMAP" id="MF_00303">
    <property type="entry name" value="Trigger_factor_Tig"/>
    <property type="match status" value="1"/>
</dbReference>
<dbReference type="InterPro" id="IPR046357">
    <property type="entry name" value="PPIase_dom_sf"/>
</dbReference>
<dbReference type="InterPro" id="IPR001179">
    <property type="entry name" value="PPIase_FKBP_dom"/>
</dbReference>
<dbReference type="InterPro" id="IPR005215">
    <property type="entry name" value="Trig_fac"/>
</dbReference>
<dbReference type="InterPro" id="IPR008880">
    <property type="entry name" value="Trigger_fac_C"/>
</dbReference>
<dbReference type="InterPro" id="IPR037041">
    <property type="entry name" value="Trigger_fac_C_sf"/>
</dbReference>
<dbReference type="InterPro" id="IPR008881">
    <property type="entry name" value="Trigger_fac_ribosome-bd_bac"/>
</dbReference>
<dbReference type="InterPro" id="IPR036611">
    <property type="entry name" value="Trigger_fac_ribosome-bd_sf"/>
</dbReference>
<dbReference type="InterPro" id="IPR027304">
    <property type="entry name" value="Trigger_fact/SurA_dom_sf"/>
</dbReference>
<dbReference type="NCBIfam" id="TIGR00115">
    <property type="entry name" value="tig"/>
    <property type="match status" value="1"/>
</dbReference>
<dbReference type="Pfam" id="PF00254">
    <property type="entry name" value="FKBP_C"/>
    <property type="match status" value="1"/>
</dbReference>
<dbReference type="Pfam" id="PF05698">
    <property type="entry name" value="Trigger_C"/>
    <property type="match status" value="1"/>
</dbReference>
<dbReference type="Pfam" id="PF05697">
    <property type="entry name" value="Trigger_N"/>
    <property type="match status" value="1"/>
</dbReference>
<dbReference type="PIRSF" id="PIRSF003095">
    <property type="entry name" value="Trigger_factor"/>
    <property type="match status" value="1"/>
</dbReference>
<dbReference type="SUPFAM" id="SSF54534">
    <property type="entry name" value="FKBP-like"/>
    <property type="match status" value="1"/>
</dbReference>
<dbReference type="SUPFAM" id="SSF109998">
    <property type="entry name" value="Triger factor/SurA peptide-binding domain-like"/>
    <property type="match status" value="1"/>
</dbReference>
<dbReference type="SUPFAM" id="SSF102735">
    <property type="entry name" value="Trigger factor ribosome-binding domain"/>
    <property type="match status" value="1"/>
</dbReference>
<dbReference type="PROSITE" id="PS50059">
    <property type="entry name" value="FKBP_PPIASE"/>
    <property type="match status" value="1"/>
</dbReference>
<name>TIG_CAMJE</name>
<protein>
    <recommendedName>
        <fullName>Trigger factor</fullName>
        <shortName>TF</shortName>
        <ecNumber>5.2.1.8</ecNumber>
    </recommendedName>
    <alternativeName>
        <fullName>PPIase</fullName>
    </alternativeName>
</protein>
<accession>Q46108</accession>
<accession>Q0PBU6</accession>
<accession>Q46109</accession>
<accession>Q9PIT6</accession>
<organism>
    <name type="scientific">Campylobacter jejuni subsp. jejuni serotype O:2 (strain ATCC 700819 / NCTC 11168)</name>
    <dbReference type="NCBI Taxonomy" id="192222"/>
    <lineage>
        <taxon>Bacteria</taxon>
        <taxon>Pseudomonadati</taxon>
        <taxon>Campylobacterota</taxon>
        <taxon>Epsilonproteobacteria</taxon>
        <taxon>Campylobacterales</taxon>
        <taxon>Campylobacteraceae</taxon>
        <taxon>Campylobacter</taxon>
    </lineage>
</organism>
<proteinExistence type="inferred from homology"/>
<comment type="function">
    <text evidence="1">Involved in protein export. Acts as a chaperone by maintaining the newly synthesized protein in an open conformation. Functions as a peptidyl-prolyl cis-trans isomerase (By similarity).</text>
</comment>
<comment type="catalytic activity">
    <reaction>
        <text>[protein]-peptidylproline (omega=180) = [protein]-peptidylproline (omega=0)</text>
        <dbReference type="Rhea" id="RHEA:16237"/>
        <dbReference type="Rhea" id="RHEA-COMP:10747"/>
        <dbReference type="Rhea" id="RHEA-COMP:10748"/>
        <dbReference type="ChEBI" id="CHEBI:83833"/>
        <dbReference type="ChEBI" id="CHEBI:83834"/>
        <dbReference type="EC" id="5.2.1.8"/>
    </reaction>
</comment>
<comment type="subcellular location">
    <subcellularLocation>
        <location>Cytoplasm</location>
    </subcellularLocation>
    <text evidence="1">About half TF is bound to the ribosome near the polypeptide exit tunnel while the other half is free in the cytoplasm.</text>
</comment>
<comment type="alternative products">
    <event type="alternative initiation"/>
    <isoform>
        <id>Q46108-1</id>
        <name>Long</name>
        <name>P2</name>
        <sequence type="displayed"/>
    </isoform>
    <isoform>
        <id>Q46108-2</id>
        <name>Short</name>
        <name>P3</name>
        <sequence type="described" ref="VSP_018899"/>
    </isoform>
</comment>
<comment type="domain">
    <text evidence="1">Consists of 3 domains; the N-terminus binds the ribosome, the middle domain has PPIase activity, while the C-terminus has intrinsic chaperone activity on its own.</text>
</comment>
<comment type="similarity">
    <text evidence="2">Belongs to the FKBP-type PPIase family. Tig subfamily.</text>
</comment>
<reference key="1">
    <citation type="journal article" date="1995" name="Microbiology">
        <title>The gene for Campylobacter trigger factor: evidence for multiple transcription start sites and protein products.</title>
        <authorList>
            <person name="Griffiths P.L."/>
            <person name="Park R.W.A."/>
            <person name="Connerton I.F."/>
        </authorList>
    </citation>
    <scope>NUCLEOTIDE SEQUENCE [GENOMIC DNA]</scope>
    <source>
        <strain>ATCC 700819 / NCTC 11168</strain>
    </source>
</reference>
<reference key="2">
    <citation type="journal article" date="2000" name="Nature">
        <title>The genome sequence of the food-borne pathogen Campylobacter jejuni reveals hypervariable sequences.</title>
        <authorList>
            <person name="Parkhill J."/>
            <person name="Wren B.W."/>
            <person name="Mungall K.L."/>
            <person name="Ketley J.M."/>
            <person name="Churcher C.M."/>
            <person name="Basham D."/>
            <person name="Chillingworth T."/>
            <person name="Davies R.M."/>
            <person name="Feltwell T."/>
            <person name="Holroyd S."/>
            <person name="Jagels K."/>
            <person name="Karlyshev A.V."/>
            <person name="Moule S."/>
            <person name="Pallen M.J."/>
            <person name="Penn C.W."/>
            <person name="Quail M.A."/>
            <person name="Rajandream M.A."/>
            <person name="Rutherford K.M."/>
            <person name="van Vliet A.H.M."/>
            <person name="Whitehead S."/>
            <person name="Barrell B.G."/>
        </authorList>
    </citation>
    <scope>NUCLEOTIDE SEQUENCE [LARGE SCALE GENOMIC DNA]</scope>
    <source>
        <strain>ATCC 700819 / NCTC 11168</strain>
    </source>
</reference>
<evidence type="ECO:0000250" key="1"/>
<evidence type="ECO:0000305" key="2"/>